<accession>Q54X53</accession>
<reference key="1">
    <citation type="journal article" date="2005" name="Nature">
        <title>The genome of the social amoeba Dictyostelium discoideum.</title>
        <authorList>
            <person name="Eichinger L."/>
            <person name="Pachebat J.A."/>
            <person name="Gloeckner G."/>
            <person name="Rajandream M.A."/>
            <person name="Sucgang R."/>
            <person name="Berriman M."/>
            <person name="Song J."/>
            <person name="Olsen R."/>
            <person name="Szafranski K."/>
            <person name="Xu Q."/>
            <person name="Tunggal B."/>
            <person name="Kummerfeld S."/>
            <person name="Madera M."/>
            <person name="Konfortov B.A."/>
            <person name="Rivero F."/>
            <person name="Bankier A.T."/>
            <person name="Lehmann R."/>
            <person name="Hamlin N."/>
            <person name="Davies R."/>
            <person name="Gaudet P."/>
            <person name="Fey P."/>
            <person name="Pilcher K."/>
            <person name="Chen G."/>
            <person name="Saunders D."/>
            <person name="Sodergren E.J."/>
            <person name="Davis P."/>
            <person name="Kerhornou A."/>
            <person name="Nie X."/>
            <person name="Hall N."/>
            <person name="Anjard C."/>
            <person name="Hemphill L."/>
            <person name="Bason N."/>
            <person name="Farbrother P."/>
            <person name="Desany B."/>
            <person name="Just E."/>
            <person name="Morio T."/>
            <person name="Rost R."/>
            <person name="Churcher C.M."/>
            <person name="Cooper J."/>
            <person name="Haydock S."/>
            <person name="van Driessche N."/>
            <person name="Cronin A."/>
            <person name="Goodhead I."/>
            <person name="Muzny D.M."/>
            <person name="Mourier T."/>
            <person name="Pain A."/>
            <person name="Lu M."/>
            <person name="Harper D."/>
            <person name="Lindsay R."/>
            <person name="Hauser H."/>
            <person name="James K.D."/>
            <person name="Quiles M."/>
            <person name="Madan Babu M."/>
            <person name="Saito T."/>
            <person name="Buchrieser C."/>
            <person name="Wardroper A."/>
            <person name="Felder M."/>
            <person name="Thangavelu M."/>
            <person name="Johnson D."/>
            <person name="Knights A."/>
            <person name="Loulseged H."/>
            <person name="Mungall K.L."/>
            <person name="Oliver K."/>
            <person name="Price C."/>
            <person name="Quail M.A."/>
            <person name="Urushihara H."/>
            <person name="Hernandez J."/>
            <person name="Rabbinowitsch E."/>
            <person name="Steffen D."/>
            <person name="Sanders M."/>
            <person name="Ma J."/>
            <person name="Kohara Y."/>
            <person name="Sharp S."/>
            <person name="Simmonds M.N."/>
            <person name="Spiegler S."/>
            <person name="Tivey A."/>
            <person name="Sugano S."/>
            <person name="White B."/>
            <person name="Walker D."/>
            <person name="Woodward J.R."/>
            <person name="Winckler T."/>
            <person name="Tanaka Y."/>
            <person name="Shaulsky G."/>
            <person name="Schleicher M."/>
            <person name="Weinstock G.M."/>
            <person name="Rosenthal A."/>
            <person name="Cox E.C."/>
            <person name="Chisholm R.L."/>
            <person name="Gibbs R.A."/>
            <person name="Loomis W.F."/>
            <person name="Platzer M."/>
            <person name="Kay R.R."/>
            <person name="Williams J.G."/>
            <person name="Dear P.H."/>
            <person name="Noegel A.A."/>
            <person name="Barrell B.G."/>
            <person name="Kuspa A."/>
        </authorList>
    </citation>
    <scope>NUCLEOTIDE SEQUENCE [LARGE SCALE GENOMIC DNA]</scope>
    <source>
        <strain>AX4</strain>
    </source>
</reference>
<feature type="chain" id="PRO_0000326191" description="Large ribosomal subunit protein eL21">
    <location>
        <begin position="1"/>
        <end position="160"/>
    </location>
</feature>
<evidence type="ECO:0000305" key="1"/>
<sequence>MPHSFGLRARTRYLFSRGFRNHGLLQTTTFLRTFRLGDYVDIKATGNVHKGMPHKFYHGRTGRVWNVTPRAVGVIINKRVGPRIIAKKIHVRTEHVKPSNSMAAHLKRIQENKKAVVEAKKAGKWVDVRRNPAAPKDGFFVNPRNTEFVEVKPVKYELLL</sequence>
<protein>
    <recommendedName>
        <fullName evidence="1">Large ribosomal subunit protein eL21</fullName>
    </recommendedName>
    <alternativeName>
        <fullName>60S ribosomal protein L21</fullName>
    </alternativeName>
</protein>
<organism>
    <name type="scientific">Dictyostelium discoideum</name>
    <name type="common">Social amoeba</name>
    <dbReference type="NCBI Taxonomy" id="44689"/>
    <lineage>
        <taxon>Eukaryota</taxon>
        <taxon>Amoebozoa</taxon>
        <taxon>Evosea</taxon>
        <taxon>Eumycetozoa</taxon>
        <taxon>Dictyostelia</taxon>
        <taxon>Dictyosteliales</taxon>
        <taxon>Dictyosteliaceae</taxon>
        <taxon>Dictyostelium</taxon>
    </lineage>
</organism>
<name>RL21_DICDI</name>
<comment type="similarity">
    <text evidence="1">Belongs to the eukaryotic ribosomal protein eL21 family.</text>
</comment>
<gene>
    <name type="primary">rpl21</name>
    <name type="ORF">DDB_G0279387</name>
</gene>
<proteinExistence type="inferred from homology"/>
<dbReference type="EMBL" id="AAFI02000030">
    <property type="protein sequence ID" value="EAL67842.1"/>
    <property type="molecule type" value="Genomic_DNA"/>
</dbReference>
<dbReference type="RefSeq" id="XP_641724.1">
    <property type="nucleotide sequence ID" value="XM_636632.1"/>
</dbReference>
<dbReference type="SMR" id="Q54X53"/>
<dbReference type="FunCoup" id="Q54X53">
    <property type="interactions" value="574"/>
</dbReference>
<dbReference type="STRING" id="44689.Q54X53"/>
<dbReference type="GlyGen" id="Q54X53">
    <property type="glycosylation" value="1 site"/>
</dbReference>
<dbReference type="PaxDb" id="44689-DDB0229962"/>
<dbReference type="EnsemblProtists" id="EAL67842">
    <property type="protein sequence ID" value="EAL67842"/>
    <property type="gene ID" value="DDB_G0279387"/>
</dbReference>
<dbReference type="GeneID" id="8621919"/>
<dbReference type="KEGG" id="ddi:DDB_G0279387"/>
<dbReference type="dictyBase" id="DDB_G0279387">
    <property type="gene designation" value="rpl21"/>
</dbReference>
<dbReference type="VEuPathDB" id="AmoebaDB:DDB_G0279387"/>
<dbReference type="eggNOG" id="KOG1732">
    <property type="taxonomic scope" value="Eukaryota"/>
</dbReference>
<dbReference type="HOGENOM" id="CLU_103610_0_1_1"/>
<dbReference type="InParanoid" id="Q54X53"/>
<dbReference type="OMA" id="INYGDYV"/>
<dbReference type="PhylomeDB" id="Q54X53"/>
<dbReference type="Reactome" id="R-DDI-156827">
    <property type="pathway name" value="L13a-mediated translational silencing of Ceruloplasmin expression"/>
</dbReference>
<dbReference type="Reactome" id="R-DDI-1799339">
    <property type="pathway name" value="SRP-dependent cotranslational protein targeting to membrane"/>
</dbReference>
<dbReference type="Reactome" id="R-DDI-72689">
    <property type="pathway name" value="Formation of a pool of free 40S subunits"/>
</dbReference>
<dbReference type="Reactome" id="R-DDI-72706">
    <property type="pathway name" value="GTP hydrolysis and joining of the 60S ribosomal subunit"/>
</dbReference>
<dbReference type="Reactome" id="R-DDI-975956">
    <property type="pathway name" value="Nonsense Mediated Decay (NMD) independent of the Exon Junction Complex (EJC)"/>
</dbReference>
<dbReference type="Reactome" id="R-DDI-975957">
    <property type="pathway name" value="Nonsense Mediated Decay (NMD) enhanced by the Exon Junction Complex (EJC)"/>
</dbReference>
<dbReference type="PRO" id="PR:Q54X53"/>
<dbReference type="Proteomes" id="UP000002195">
    <property type="component" value="Chromosome 3"/>
</dbReference>
<dbReference type="GO" id="GO:0022625">
    <property type="term" value="C:cytosolic large ribosomal subunit"/>
    <property type="evidence" value="ECO:0000318"/>
    <property type="project" value="GO_Central"/>
</dbReference>
<dbReference type="GO" id="GO:0031012">
    <property type="term" value="C:extracellular matrix"/>
    <property type="evidence" value="ECO:0007005"/>
    <property type="project" value="dictyBase"/>
</dbReference>
<dbReference type="GO" id="GO:0003735">
    <property type="term" value="F:structural constituent of ribosome"/>
    <property type="evidence" value="ECO:0000318"/>
    <property type="project" value="GO_Central"/>
</dbReference>
<dbReference type="GO" id="GO:0009617">
    <property type="term" value="P:response to bacterium"/>
    <property type="evidence" value="ECO:0007007"/>
    <property type="project" value="dictyBase"/>
</dbReference>
<dbReference type="GO" id="GO:0006412">
    <property type="term" value="P:translation"/>
    <property type="evidence" value="ECO:0007669"/>
    <property type="project" value="InterPro"/>
</dbReference>
<dbReference type="FunFam" id="2.30.30.70:FF:000001">
    <property type="entry name" value="60S ribosomal protein L21"/>
    <property type="match status" value="1"/>
</dbReference>
<dbReference type="FunFam" id="6.10.250.3260:FF:000002">
    <property type="entry name" value="60S ribosomal protein L21"/>
    <property type="match status" value="1"/>
</dbReference>
<dbReference type="Gene3D" id="6.10.250.3260">
    <property type="match status" value="1"/>
</dbReference>
<dbReference type="Gene3D" id="2.30.30.70">
    <property type="entry name" value="Ribosomal protein L21"/>
    <property type="match status" value="1"/>
</dbReference>
<dbReference type="InterPro" id="IPR001147">
    <property type="entry name" value="Ribosomal_eL21"/>
</dbReference>
<dbReference type="InterPro" id="IPR018259">
    <property type="entry name" value="Ribosomal_eL21_CS"/>
</dbReference>
<dbReference type="InterPro" id="IPR036948">
    <property type="entry name" value="Ribosomal_eL21_sf"/>
</dbReference>
<dbReference type="InterPro" id="IPR008991">
    <property type="entry name" value="Translation_prot_SH3-like_sf"/>
</dbReference>
<dbReference type="PANTHER" id="PTHR20981">
    <property type="entry name" value="60S RIBOSOMAL PROTEIN L21"/>
    <property type="match status" value="1"/>
</dbReference>
<dbReference type="Pfam" id="PF01157">
    <property type="entry name" value="Ribosomal_L21e"/>
    <property type="match status" value="1"/>
</dbReference>
<dbReference type="SUPFAM" id="SSF50104">
    <property type="entry name" value="Translation proteins SH3-like domain"/>
    <property type="match status" value="1"/>
</dbReference>
<dbReference type="PROSITE" id="PS01171">
    <property type="entry name" value="RIBOSOMAL_L21E"/>
    <property type="match status" value="1"/>
</dbReference>
<keyword id="KW-1185">Reference proteome</keyword>
<keyword id="KW-0687">Ribonucleoprotein</keyword>
<keyword id="KW-0689">Ribosomal protein</keyword>